<protein>
    <recommendedName>
        <fullName evidence="1">eIF5-mimic protein 2-B</fullName>
    </recommendedName>
    <alternativeName>
        <fullName>Basic leucine zipper and W2 domain-containing protein 1-B</fullName>
    </alternativeName>
</protein>
<dbReference type="EMBL" id="BC044401">
    <property type="protein sequence ID" value="AAH44401.1"/>
    <property type="molecule type" value="mRNA"/>
</dbReference>
<dbReference type="EMBL" id="BC066527">
    <property type="protein sequence ID" value="AAH66527.1"/>
    <property type="molecule type" value="mRNA"/>
</dbReference>
<dbReference type="EMBL" id="BC091971">
    <property type="protein sequence ID" value="AAH91971.1"/>
    <property type="molecule type" value="mRNA"/>
</dbReference>
<dbReference type="RefSeq" id="NP_998257.1">
    <property type="nucleotide sequence ID" value="NM_213092.1"/>
</dbReference>
<dbReference type="RefSeq" id="XP_005167447.1">
    <property type="nucleotide sequence ID" value="XM_005167390.3"/>
</dbReference>
<dbReference type="SMR" id="Q803N9"/>
<dbReference type="FunCoup" id="Q803N9">
    <property type="interactions" value="394"/>
</dbReference>
<dbReference type="STRING" id="7955.ENSDARP00000135869"/>
<dbReference type="PaxDb" id="7955-ENSDARP00000002262"/>
<dbReference type="GeneID" id="406812"/>
<dbReference type="KEGG" id="dre:406812"/>
<dbReference type="AGR" id="ZFIN:ZDB-GENE-040426-2881"/>
<dbReference type="CTD" id="406812"/>
<dbReference type="ZFIN" id="ZDB-GENE-040426-2881">
    <property type="gene designation" value="bzw1b"/>
</dbReference>
<dbReference type="eggNOG" id="KOG2297">
    <property type="taxonomic scope" value="Eukaryota"/>
</dbReference>
<dbReference type="InParanoid" id="Q803N9"/>
<dbReference type="OrthoDB" id="1727522at2759"/>
<dbReference type="PhylomeDB" id="Q803N9"/>
<dbReference type="TreeFam" id="TF324313"/>
<dbReference type="PRO" id="PR:Q803N9"/>
<dbReference type="Proteomes" id="UP000000437">
    <property type="component" value="Chromosome 9"/>
</dbReference>
<dbReference type="GO" id="GO:0005737">
    <property type="term" value="C:cytoplasm"/>
    <property type="evidence" value="ECO:0000318"/>
    <property type="project" value="GO_Central"/>
</dbReference>
<dbReference type="GO" id="GO:0006446">
    <property type="term" value="P:regulation of translational initiation"/>
    <property type="evidence" value="ECO:0000250"/>
    <property type="project" value="UniProtKB"/>
</dbReference>
<dbReference type="CDD" id="cd11560">
    <property type="entry name" value="W2_eIF5C_like"/>
    <property type="match status" value="1"/>
</dbReference>
<dbReference type="FunFam" id="1.25.40.180:FF:000006">
    <property type="entry name" value="Basic leucine zipper and W2 domain-containing protein 1"/>
    <property type="match status" value="1"/>
</dbReference>
<dbReference type="Gene3D" id="1.25.40.180">
    <property type="match status" value="1"/>
</dbReference>
<dbReference type="InterPro" id="IPR016024">
    <property type="entry name" value="ARM-type_fold"/>
</dbReference>
<dbReference type="InterPro" id="IPR051245">
    <property type="entry name" value="eIF5-mimic_regulator"/>
</dbReference>
<dbReference type="InterPro" id="IPR043510">
    <property type="entry name" value="W2_BZW1/2"/>
</dbReference>
<dbReference type="InterPro" id="IPR003307">
    <property type="entry name" value="W2_domain"/>
</dbReference>
<dbReference type="PANTHER" id="PTHR14208">
    <property type="entry name" value="BASIC LEUCINE ZIPPER AND W2 DOMAIN-CONTAINING PROTEIN"/>
    <property type="match status" value="1"/>
</dbReference>
<dbReference type="PANTHER" id="PTHR14208:SF0">
    <property type="entry name" value="EIF5-MIMIC PROTEIN 2"/>
    <property type="match status" value="1"/>
</dbReference>
<dbReference type="Pfam" id="PF25504">
    <property type="entry name" value="HEAT_5MP1_2"/>
    <property type="match status" value="1"/>
</dbReference>
<dbReference type="Pfam" id="PF02020">
    <property type="entry name" value="W2"/>
    <property type="match status" value="1"/>
</dbReference>
<dbReference type="SMART" id="SM00515">
    <property type="entry name" value="eIF5C"/>
    <property type="match status" value="1"/>
</dbReference>
<dbReference type="SUPFAM" id="SSF48371">
    <property type="entry name" value="ARM repeat"/>
    <property type="match status" value="1"/>
</dbReference>
<dbReference type="PROSITE" id="PS51363">
    <property type="entry name" value="W2"/>
    <property type="match status" value="1"/>
</dbReference>
<feature type="chain" id="PRO_0000254615" description="eIF5-mimic protein 2-B">
    <location>
        <begin position="1"/>
        <end position="418"/>
    </location>
</feature>
<feature type="domain" description="W2" evidence="2">
    <location>
        <begin position="247"/>
        <end position="414"/>
    </location>
</feature>
<feature type="region of interest" description="Disordered" evidence="3">
    <location>
        <begin position="1"/>
        <end position="29"/>
    </location>
</feature>
<feature type="compositionally biased region" description="Polar residues" evidence="3">
    <location>
        <begin position="1"/>
        <end position="15"/>
    </location>
</feature>
<feature type="sequence conflict" description="In Ref. 1; AAH44401." evidence="4" ref="1">
    <original>F</original>
    <variation>S</variation>
    <location>
        <position position="271"/>
    </location>
</feature>
<feature type="sequence conflict" description="In Ref. 1; AAH44401." evidence="4" ref="1">
    <original>M</original>
    <variation>A</variation>
    <location>
        <position position="304"/>
    </location>
</feature>
<feature type="sequence conflict" description="In Ref. 1; AAH44401." evidence="4" ref="1">
    <original>V</original>
    <variation>I</variation>
    <location>
        <position position="363"/>
    </location>
</feature>
<evidence type="ECO:0000250" key="1">
    <source>
        <dbReference type="UniProtKB" id="Q7L1Q6"/>
    </source>
</evidence>
<evidence type="ECO:0000255" key="2">
    <source>
        <dbReference type="PROSITE-ProRule" id="PRU00695"/>
    </source>
</evidence>
<evidence type="ECO:0000256" key="3">
    <source>
        <dbReference type="SAM" id="MobiDB-lite"/>
    </source>
</evidence>
<evidence type="ECO:0000305" key="4"/>
<keyword id="KW-0010">Activator</keyword>
<keyword id="KW-1185">Reference proteome</keyword>
<keyword id="KW-0804">Transcription</keyword>
<keyword id="KW-0805">Transcription regulation</keyword>
<keyword id="KW-0810">Translation regulation</keyword>
<proteinExistence type="evidence at transcript level"/>
<gene>
    <name type="primary">bzw1b</name>
    <name evidence="1" type="synonym">5mp2b</name>
    <name type="synonym">bzw1l</name>
    <name type="ORF">zgc:110545</name>
    <name type="ORF">zgc:55457</name>
    <name type="ORF">zgc:76909</name>
</gene>
<reference key="1">
    <citation type="submission" date="2003-01" db="EMBL/GenBank/DDBJ databases">
        <authorList>
            <consortium name="NIH - Zebrafish Gene Collection (ZGC) project"/>
        </authorList>
    </citation>
    <scope>NUCLEOTIDE SEQUENCE [LARGE SCALE MRNA]</scope>
    <source>
        <strain>AB</strain>
        <tissue>Embryo</tissue>
        <tissue>Kidney</tissue>
    </source>
</reference>
<accession>Q803N9</accession>
<accession>Q58ED0</accession>
<accession>Q6NYN0</accession>
<comment type="function">
    <text evidence="1">Translation initiation regulator which may repress repeat-associated non-AUG (RAN) initiated translation probably by acting as a competitive inhibitor of eukaryotic translation initiation factor 5 (EIF5) function (By similarity). Enhances histone H4 gene transcription but does not seem to bind DNA directly (By similarity).</text>
</comment>
<comment type="similarity">
    <text evidence="4">Belongs to the BZW family.</text>
</comment>
<sequence>MSYQKQQKPTLTGQRFKTRKRDEKERFDPSQFQESIVQGLNQTGTDLEAVAKFLDSSGAKLDYRRYAETLFDILVAGGMLAPGGALSDDMTRTKYCVFTAQEDIKTMKAYAQVFNKLIRRYKYLEKGFEEEIKKLLLFLKGFSESERNKLAMLTGVLLGNGSLSAAILSSLFNDNLVKEGVSPAFAVKLFKSWISEKDINSVAGSLRKVSMDNRLMELFPVNKRSYEHFSRYFTGAGLKEISDFARNQQSLGARKELQKELQEQISLGVSFKEIIDYCKEEMKRSSISEQLMIGIMWTSLMSDMEWNKKEELVTEQAIKHLKQHSPLLKAFSTQAQSELSLLQRIQEFCYDNIHFMKTFQKMVLLLYKVDVLSEEAVLKWFTEAHLAKGKSVFLEQMKTFVEWLKNAEEESESEEESD</sequence>
<organism>
    <name type="scientific">Danio rerio</name>
    <name type="common">Zebrafish</name>
    <name type="synonym">Brachydanio rerio</name>
    <dbReference type="NCBI Taxonomy" id="7955"/>
    <lineage>
        <taxon>Eukaryota</taxon>
        <taxon>Metazoa</taxon>
        <taxon>Chordata</taxon>
        <taxon>Craniata</taxon>
        <taxon>Vertebrata</taxon>
        <taxon>Euteleostomi</taxon>
        <taxon>Actinopterygii</taxon>
        <taxon>Neopterygii</taxon>
        <taxon>Teleostei</taxon>
        <taxon>Ostariophysi</taxon>
        <taxon>Cypriniformes</taxon>
        <taxon>Danionidae</taxon>
        <taxon>Danioninae</taxon>
        <taxon>Danio</taxon>
    </lineage>
</organism>
<name>5MP2B_DANRE</name>